<accession>B1KI99</accession>
<evidence type="ECO:0000250" key="1"/>
<evidence type="ECO:0000255" key="2">
    <source>
        <dbReference type="HAMAP-Rule" id="MF_00047"/>
    </source>
</evidence>
<evidence type="ECO:0000305" key="3"/>
<comment type="function">
    <text evidence="2">Cell wall formation.</text>
</comment>
<comment type="catalytic activity">
    <reaction evidence="2">
        <text>2 D-alanine + ATP = D-alanyl-D-alanine + ADP + phosphate + H(+)</text>
        <dbReference type="Rhea" id="RHEA:11224"/>
        <dbReference type="ChEBI" id="CHEBI:15378"/>
        <dbReference type="ChEBI" id="CHEBI:30616"/>
        <dbReference type="ChEBI" id="CHEBI:43474"/>
        <dbReference type="ChEBI" id="CHEBI:57416"/>
        <dbReference type="ChEBI" id="CHEBI:57822"/>
        <dbReference type="ChEBI" id="CHEBI:456216"/>
        <dbReference type="EC" id="6.3.2.4"/>
    </reaction>
</comment>
<comment type="cofactor">
    <cofactor evidence="1">
        <name>Mg(2+)</name>
        <dbReference type="ChEBI" id="CHEBI:18420"/>
    </cofactor>
    <cofactor evidence="1">
        <name>Mn(2+)</name>
        <dbReference type="ChEBI" id="CHEBI:29035"/>
    </cofactor>
    <text evidence="1">Binds 2 magnesium or manganese ions per subunit.</text>
</comment>
<comment type="pathway">
    <text evidence="2">Cell wall biogenesis; peptidoglycan biosynthesis.</text>
</comment>
<comment type="subcellular location">
    <subcellularLocation>
        <location evidence="2">Cytoplasm</location>
    </subcellularLocation>
</comment>
<comment type="similarity">
    <text evidence="2">Belongs to the D-alanine--D-alanine ligase family.</text>
</comment>
<comment type="sequence caution" evidence="3">
    <conflict type="erroneous initiation">
        <sequence resource="EMBL-CDS" id="ACA86950"/>
    </conflict>
</comment>
<protein>
    <recommendedName>
        <fullName evidence="2">D-alanine--D-alanine ligase</fullName>
        <ecNumber evidence="2">6.3.2.4</ecNumber>
    </recommendedName>
    <alternativeName>
        <fullName evidence="2">D-Ala-D-Ala ligase</fullName>
    </alternativeName>
    <alternativeName>
        <fullName evidence="2">D-alanylalanine synthetase</fullName>
    </alternativeName>
</protein>
<reference key="1">
    <citation type="submission" date="2008-02" db="EMBL/GenBank/DDBJ databases">
        <title>Complete sequence of Shewanella woodyi ATCC 51908.</title>
        <authorList>
            <consortium name="US DOE Joint Genome Institute"/>
            <person name="Copeland A."/>
            <person name="Lucas S."/>
            <person name="Lapidus A."/>
            <person name="Glavina del Rio T."/>
            <person name="Dalin E."/>
            <person name="Tice H."/>
            <person name="Bruce D."/>
            <person name="Goodwin L."/>
            <person name="Pitluck S."/>
            <person name="Sims D."/>
            <person name="Brettin T."/>
            <person name="Detter J.C."/>
            <person name="Han C."/>
            <person name="Kuske C.R."/>
            <person name="Schmutz J."/>
            <person name="Larimer F."/>
            <person name="Land M."/>
            <person name="Hauser L."/>
            <person name="Kyrpides N."/>
            <person name="Lykidis A."/>
            <person name="Zhao J.-S."/>
            <person name="Richardson P."/>
        </authorList>
    </citation>
    <scope>NUCLEOTIDE SEQUENCE [LARGE SCALE GENOMIC DNA]</scope>
    <source>
        <strain>ATCC 51908 / MS32</strain>
    </source>
</reference>
<keyword id="KW-0067">ATP-binding</keyword>
<keyword id="KW-0133">Cell shape</keyword>
<keyword id="KW-0961">Cell wall biogenesis/degradation</keyword>
<keyword id="KW-0963">Cytoplasm</keyword>
<keyword id="KW-0436">Ligase</keyword>
<keyword id="KW-0460">Magnesium</keyword>
<keyword id="KW-0464">Manganese</keyword>
<keyword id="KW-0479">Metal-binding</keyword>
<keyword id="KW-0547">Nucleotide-binding</keyword>
<keyword id="KW-0573">Peptidoglycan synthesis</keyword>
<keyword id="KW-1185">Reference proteome</keyword>
<dbReference type="EC" id="6.3.2.4" evidence="2"/>
<dbReference type="EMBL" id="CP000961">
    <property type="protein sequence ID" value="ACA86950.1"/>
    <property type="status" value="ALT_INIT"/>
    <property type="molecule type" value="Genomic_DNA"/>
</dbReference>
<dbReference type="RefSeq" id="WP_041418165.1">
    <property type="nucleotide sequence ID" value="NC_010506.1"/>
</dbReference>
<dbReference type="SMR" id="B1KI99"/>
<dbReference type="STRING" id="392500.Swoo_2674"/>
<dbReference type="KEGG" id="swd:Swoo_2674"/>
<dbReference type="eggNOG" id="COG1181">
    <property type="taxonomic scope" value="Bacteria"/>
</dbReference>
<dbReference type="HOGENOM" id="CLU_039268_0_0_6"/>
<dbReference type="UniPathway" id="UPA00219"/>
<dbReference type="Proteomes" id="UP000002168">
    <property type="component" value="Chromosome"/>
</dbReference>
<dbReference type="GO" id="GO:0005829">
    <property type="term" value="C:cytosol"/>
    <property type="evidence" value="ECO:0007669"/>
    <property type="project" value="TreeGrafter"/>
</dbReference>
<dbReference type="GO" id="GO:0005524">
    <property type="term" value="F:ATP binding"/>
    <property type="evidence" value="ECO:0007669"/>
    <property type="project" value="UniProtKB-KW"/>
</dbReference>
<dbReference type="GO" id="GO:0008716">
    <property type="term" value="F:D-alanine-D-alanine ligase activity"/>
    <property type="evidence" value="ECO:0007669"/>
    <property type="project" value="UniProtKB-UniRule"/>
</dbReference>
<dbReference type="GO" id="GO:0046872">
    <property type="term" value="F:metal ion binding"/>
    <property type="evidence" value="ECO:0007669"/>
    <property type="project" value="UniProtKB-KW"/>
</dbReference>
<dbReference type="GO" id="GO:0071555">
    <property type="term" value="P:cell wall organization"/>
    <property type="evidence" value="ECO:0007669"/>
    <property type="project" value="UniProtKB-KW"/>
</dbReference>
<dbReference type="GO" id="GO:0009252">
    <property type="term" value="P:peptidoglycan biosynthetic process"/>
    <property type="evidence" value="ECO:0007669"/>
    <property type="project" value="UniProtKB-UniRule"/>
</dbReference>
<dbReference type="GO" id="GO:0008360">
    <property type="term" value="P:regulation of cell shape"/>
    <property type="evidence" value="ECO:0007669"/>
    <property type="project" value="UniProtKB-KW"/>
</dbReference>
<dbReference type="Gene3D" id="3.40.50.20">
    <property type="match status" value="1"/>
</dbReference>
<dbReference type="Gene3D" id="3.30.1490.20">
    <property type="entry name" value="ATP-grasp fold, A domain"/>
    <property type="match status" value="1"/>
</dbReference>
<dbReference type="Gene3D" id="3.30.470.20">
    <property type="entry name" value="ATP-grasp fold, B domain"/>
    <property type="match status" value="1"/>
</dbReference>
<dbReference type="HAMAP" id="MF_00047">
    <property type="entry name" value="Dala_Dala_lig"/>
    <property type="match status" value="1"/>
</dbReference>
<dbReference type="InterPro" id="IPR011761">
    <property type="entry name" value="ATP-grasp"/>
</dbReference>
<dbReference type="InterPro" id="IPR013815">
    <property type="entry name" value="ATP_grasp_subdomain_1"/>
</dbReference>
<dbReference type="InterPro" id="IPR000291">
    <property type="entry name" value="D-Ala_lig_Van_CS"/>
</dbReference>
<dbReference type="InterPro" id="IPR005905">
    <property type="entry name" value="D_ala_D_ala"/>
</dbReference>
<dbReference type="InterPro" id="IPR011095">
    <property type="entry name" value="Dala_Dala_lig_C"/>
</dbReference>
<dbReference type="InterPro" id="IPR011127">
    <property type="entry name" value="Dala_Dala_lig_N"/>
</dbReference>
<dbReference type="InterPro" id="IPR016185">
    <property type="entry name" value="PreATP-grasp_dom_sf"/>
</dbReference>
<dbReference type="NCBIfam" id="TIGR01205">
    <property type="entry name" value="D_ala_D_alaTIGR"/>
    <property type="match status" value="1"/>
</dbReference>
<dbReference type="NCBIfam" id="NF002527">
    <property type="entry name" value="PRK01966.1-3"/>
    <property type="match status" value="1"/>
</dbReference>
<dbReference type="NCBIfam" id="NF002528">
    <property type="entry name" value="PRK01966.1-4"/>
    <property type="match status" value="1"/>
</dbReference>
<dbReference type="PANTHER" id="PTHR23132">
    <property type="entry name" value="D-ALANINE--D-ALANINE LIGASE"/>
    <property type="match status" value="1"/>
</dbReference>
<dbReference type="PANTHER" id="PTHR23132:SF25">
    <property type="entry name" value="D-ALANINE--D-ALANINE LIGASE A"/>
    <property type="match status" value="1"/>
</dbReference>
<dbReference type="Pfam" id="PF07478">
    <property type="entry name" value="Dala_Dala_lig_C"/>
    <property type="match status" value="1"/>
</dbReference>
<dbReference type="Pfam" id="PF01820">
    <property type="entry name" value="Dala_Dala_lig_N"/>
    <property type="match status" value="1"/>
</dbReference>
<dbReference type="PIRSF" id="PIRSF039102">
    <property type="entry name" value="Ddl/VanB"/>
    <property type="match status" value="1"/>
</dbReference>
<dbReference type="SUPFAM" id="SSF56059">
    <property type="entry name" value="Glutathione synthetase ATP-binding domain-like"/>
    <property type="match status" value="1"/>
</dbReference>
<dbReference type="SUPFAM" id="SSF52440">
    <property type="entry name" value="PreATP-grasp domain"/>
    <property type="match status" value="1"/>
</dbReference>
<dbReference type="PROSITE" id="PS50975">
    <property type="entry name" value="ATP_GRASP"/>
    <property type="match status" value="1"/>
</dbReference>
<dbReference type="PROSITE" id="PS00843">
    <property type="entry name" value="DALA_DALA_LIGASE_1"/>
    <property type="match status" value="1"/>
</dbReference>
<dbReference type="PROSITE" id="PS00844">
    <property type="entry name" value="DALA_DALA_LIGASE_2"/>
    <property type="match status" value="1"/>
</dbReference>
<organism>
    <name type="scientific">Shewanella woodyi (strain ATCC 51908 / MS32)</name>
    <dbReference type="NCBI Taxonomy" id="392500"/>
    <lineage>
        <taxon>Bacteria</taxon>
        <taxon>Pseudomonadati</taxon>
        <taxon>Pseudomonadota</taxon>
        <taxon>Gammaproteobacteria</taxon>
        <taxon>Alteromonadales</taxon>
        <taxon>Shewanellaceae</taxon>
        <taxon>Shewanella</taxon>
    </lineage>
</organism>
<sequence length="335" mass="37321">MSQINLLLLCGGGGDEHAISLMSADFLETSLAKEPEINLLRVELDGQGHYRTQDGRSCELTNRKEIRFAAEEQAPWPVDYVIPCIHGFPGETGDIQSYFDLIKLPFFGCDSESSSNCFNKVTAKMWFSALGVPNTPYIFLNELNQESIAQTKQALENWGSIFIKAASQGSSVGCYRVDSQDELVSSLEQAFSFSPYVIVEKTINARELEVAAYELNGEIVATKPGEIICASNTFYSFDEKYAANSKAETKVEADVSEEVAQQIQAYAIKVFKGMKLSHLSRIDFFLTEDNEILLNEINTFPGLTPISMFPKMLQNHGDDFTHYLYSNIKSQLVSA</sequence>
<proteinExistence type="inferred from homology"/>
<gene>
    <name evidence="2" type="primary">ddl</name>
    <name type="ordered locus">Swoo_2674</name>
</gene>
<name>DDL_SHEWM</name>
<feature type="chain" id="PRO_0000341172" description="D-alanine--D-alanine ligase">
    <location>
        <begin position="1"/>
        <end position="335"/>
    </location>
</feature>
<feature type="domain" description="ATP-grasp" evidence="2">
    <location>
        <begin position="124"/>
        <end position="329"/>
    </location>
</feature>
<feature type="binding site" evidence="2">
    <location>
        <begin position="154"/>
        <end position="209"/>
    </location>
    <ligand>
        <name>ATP</name>
        <dbReference type="ChEBI" id="CHEBI:30616"/>
    </ligand>
</feature>
<feature type="binding site" evidence="2">
    <location>
        <position position="283"/>
    </location>
    <ligand>
        <name>Mg(2+)</name>
        <dbReference type="ChEBI" id="CHEBI:18420"/>
        <label>1</label>
    </ligand>
</feature>
<feature type="binding site" evidence="2">
    <location>
        <position position="296"/>
    </location>
    <ligand>
        <name>Mg(2+)</name>
        <dbReference type="ChEBI" id="CHEBI:18420"/>
        <label>1</label>
    </ligand>
</feature>
<feature type="binding site" evidence="2">
    <location>
        <position position="296"/>
    </location>
    <ligand>
        <name>Mg(2+)</name>
        <dbReference type="ChEBI" id="CHEBI:18420"/>
        <label>2</label>
    </ligand>
</feature>
<feature type="binding site" evidence="2">
    <location>
        <position position="298"/>
    </location>
    <ligand>
        <name>Mg(2+)</name>
        <dbReference type="ChEBI" id="CHEBI:18420"/>
        <label>2</label>
    </ligand>
</feature>